<protein>
    <recommendedName>
        <fullName>Retinoid isomerohydrolase</fullName>
        <ecNumber evidence="3">3.1.1.64</ecNumber>
    </recommendedName>
    <alternativeName>
        <fullName>All-trans-retinyl-palmitate hydrolase</fullName>
    </alternativeName>
    <alternativeName>
        <fullName>Lutein isomerase</fullName>
    </alternativeName>
    <alternativeName>
        <fullName>Meso-zeaxanthin isomerase</fullName>
        <ecNumber evidence="2">5.3.3.22</ecNumber>
    </alternativeName>
    <alternativeName>
        <fullName>Retinal pigment epithelium-specific 65 kDa protein</fullName>
    </alternativeName>
    <alternativeName>
        <fullName>Retinol isomerase</fullName>
    </alternativeName>
</protein>
<organism>
    <name type="scientific">Chlorocebus aethiops</name>
    <name type="common">Green monkey</name>
    <name type="synonym">Cercopithecus aethiops</name>
    <dbReference type="NCBI Taxonomy" id="9534"/>
    <lineage>
        <taxon>Eukaryota</taxon>
        <taxon>Metazoa</taxon>
        <taxon>Chordata</taxon>
        <taxon>Craniata</taxon>
        <taxon>Vertebrata</taxon>
        <taxon>Euteleostomi</taxon>
        <taxon>Mammalia</taxon>
        <taxon>Eutheria</taxon>
        <taxon>Euarchontoglires</taxon>
        <taxon>Primates</taxon>
        <taxon>Haplorrhini</taxon>
        <taxon>Catarrhini</taxon>
        <taxon>Cercopithecidae</taxon>
        <taxon>Cercopithecinae</taxon>
        <taxon>Chlorocebus</taxon>
    </lineage>
</organism>
<evidence type="ECO:0000250" key="1">
    <source>
        <dbReference type="UniProtKB" id="A9C3R9"/>
    </source>
</evidence>
<evidence type="ECO:0000250" key="2">
    <source>
        <dbReference type="UniProtKB" id="Q16518"/>
    </source>
</evidence>
<evidence type="ECO:0000250" key="3">
    <source>
        <dbReference type="UniProtKB" id="Q28175"/>
    </source>
</evidence>
<evidence type="ECO:0000305" key="4"/>
<comment type="function">
    <text evidence="2 3">Critical isomerohydrolase in the retinoid cycle involved in regeneration of 11-cis-retinal, the chromophore of rod and cone opsins. Catalyzes the cleavage and isomerization of all-trans-retinyl fatty acid esters to 11-cis-retinol which is further oxidized by 11-cis retinol dehydrogenase to 11-cis-retinal for use as visual chromophore. Essential for the production of 11-cis retinal for both rod and cone photoreceptors. Also capable of catalyzing the isomerization of lutein to meso-zeaxanthin an eye-specific carotenoid. The soluble form binds vitamin A (all-trans-retinol), making it available for LRAT processing to all-trans-retinyl ester. The membrane form, palmitoylated by LRAT, binds all-trans-retinyl esters, making them available for IMH (isomerohydrolase) processing to all-cis-retinol. The soluble form is regenerated by transferring its palmitoyl groups onto 11-cis-retinol, a reaction catalyzed by LRAT.</text>
</comment>
<comment type="catalytic activity">
    <reaction evidence="3">
        <text>an all-trans-retinyl ester + H2O = 11-cis-retinol + a fatty acid + H(+)</text>
        <dbReference type="Rhea" id="RHEA:31771"/>
        <dbReference type="ChEBI" id="CHEBI:15377"/>
        <dbReference type="ChEBI" id="CHEBI:15378"/>
        <dbReference type="ChEBI" id="CHEBI:16302"/>
        <dbReference type="ChEBI" id="CHEBI:28868"/>
        <dbReference type="ChEBI" id="CHEBI:63410"/>
        <dbReference type="EC" id="3.1.1.64"/>
    </reaction>
</comment>
<comment type="catalytic activity">
    <reaction evidence="2">
        <text>lutein = (3R,3'S)-zeaxanthin</text>
        <dbReference type="Rhea" id="RHEA:12729"/>
        <dbReference type="ChEBI" id="CHEBI:28838"/>
        <dbReference type="ChEBI" id="CHEBI:138919"/>
        <dbReference type="EC" id="5.3.3.22"/>
    </reaction>
</comment>
<comment type="catalytic activity">
    <reaction evidence="2">
        <text>all-trans-retinyl hexadecanoate + H2O = 11-cis-retinol + hexadecanoate + H(+)</text>
        <dbReference type="Rhea" id="RHEA:31775"/>
        <dbReference type="ChEBI" id="CHEBI:7896"/>
        <dbReference type="ChEBI" id="CHEBI:15377"/>
        <dbReference type="ChEBI" id="CHEBI:15378"/>
        <dbReference type="ChEBI" id="CHEBI:16302"/>
        <dbReference type="ChEBI" id="CHEBI:17616"/>
        <dbReference type="EC" id="3.1.1.64"/>
    </reaction>
</comment>
<comment type="cofactor">
    <cofactor evidence="3">
        <name>Fe(2+)</name>
        <dbReference type="ChEBI" id="CHEBI:29033"/>
    </cofactor>
    <text evidence="3">Binds 1 Fe(2+) ion per subunit.</text>
</comment>
<comment type="subunit">
    <text evidence="2">Interacts with MYO7A; this mediates light-dependent intracellular transport of RPE65.</text>
</comment>
<comment type="subcellular location">
    <subcellularLocation>
        <location evidence="1">Cytoplasm</location>
    </subcellularLocation>
    <subcellularLocation>
        <location evidence="3">Cell membrane</location>
        <topology evidence="3">Lipid-anchor</topology>
    </subcellularLocation>
    <subcellularLocation>
        <location evidence="3">Microsome membrane</location>
    </subcellularLocation>
    <text evidence="2 3">Attached to the membrane by a lipid anchor when palmitoylated (membrane form), soluble when unpalmitoylated. Undergoes light-dependent intracellular transport to become more concentrated in the central region of the retina pigment epithelium cells (By similarity).</text>
</comment>
<comment type="tissue specificity">
    <text>Retinal pigment epithelium specific.</text>
</comment>
<comment type="PTM">
    <text evidence="3">Palmitoylation by LRAT regulates ligand binding specificity; the palmitoylated form (membrane form) specifically binds all-trans-retinyl-palmitate, while the soluble unpalmitoylated form binds all-trans-retinol (vitamin A).</text>
</comment>
<comment type="similarity">
    <text evidence="4">Belongs to the carotenoid oxygenase family.</text>
</comment>
<dbReference type="EC" id="3.1.1.64" evidence="3"/>
<dbReference type="EC" id="5.3.3.22" evidence="2"/>
<dbReference type="EMBL" id="AF093455">
    <property type="protein sequence ID" value="AAD42042.1"/>
    <property type="molecule type" value="mRNA"/>
</dbReference>
<dbReference type="SMR" id="Q9XT71"/>
<dbReference type="GO" id="GO:0005789">
    <property type="term" value="C:endoplasmic reticulum membrane"/>
    <property type="evidence" value="ECO:0000250"/>
    <property type="project" value="UniProtKB"/>
</dbReference>
<dbReference type="GO" id="GO:0016020">
    <property type="term" value="C:membrane"/>
    <property type="evidence" value="ECO:0000250"/>
    <property type="project" value="AgBase"/>
</dbReference>
<dbReference type="GO" id="GO:0005886">
    <property type="term" value="C:plasma membrane"/>
    <property type="evidence" value="ECO:0007669"/>
    <property type="project" value="UniProtKB-SubCell"/>
</dbReference>
<dbReference type="GO" id="GO:0052885">
    <property type="term" value="F:all-trans-retinyl-ester hydrolase, 11-cis retinol forming activity"/>
    <property type="evidence" value="ECO:0000250"/>
    <property type="project" value="AgBase"/>
</dbReference>
<dbReference type="GO" id="GO:0052884">
    <property type="term" value="F:all-trans-retinyl-palmitate hydrolase, 11-cis retinol forming activity"/>
    <property type="evidence" value="ECO:0000250"/>
    <property type="project" value="UniProtKB"/>
</dbReference>
<dbReference type="GO" id="GO:0003834">
    <property type="term" value="F:beta-carotene 15,15'-dioxygenase activity"/>
    <property type="evidence" value="ECO:0007669"/>
    <property type="project" value="TreeGrafter"/>
</dbReference>
<dbReference type="GO" id="GO:1901612">
    <property type="term" value="F:cardiolipin binding"/>
    <property type="evidence" value="ECO:0000250"/>
    <property type="project" value="AgBase"/>
</dbReference>
<dbReference type="GO" id="GO:0016853">
    <property type="term" value="F:isomerase activity"/>
    <property type="evidence" value="ECO:0000250"/>
    <property type="project" value="UniProtKB"/>
</dbReference>
<dbReference type="GO" id="GO:0046872">
    <property type="term" value="F:metal ion binding"/>
    <property type="evidence" value="ECO:0007669"/>
    <property type="project" value="UniProtKB-KW"/>
</dbReference>
<dbReference type="GO" id="GO:0031210">
    <property type="term" value="F:phosphatidylcholine binding"/>
    <property type="evidence" value="ECO:0000250"/>
    <property type="project" value="AgBase"/>
</dbReference>
<dbReference type="GO" id="GO:0001786">
    <property type="term" value="F:phosphatidylserine binding"/>
    <property type="evidence" value="ECO:0000250"/>
    <property type="project" value="AgBase"/>
</dbReference>
<dbReference type="GO" id="GO:0050251">
    <property type="term" value="F:retinol isomerase activity"/>
    <property type="evidence" value="ECO:0007669"/>
    <property type="project" value="TreeGrafter"/>
</dbReference>
<dbReference type="GO" id="GO:0042574">
    <property type="term" value="P:retinal metabolic process"/>
    <property type="evidence" value="ECO:0007669"/>
    <property type="project" value="TreeGrafter"/>
</dbReference>
<dbReference type="GO" id="GO:0001523">
    <property type="term" value="P:retinoid metabolic process"/>
    <property type="evidence" value="ECO:0000250"/>
    <property type="project" value="UniProtKB"/>
</dbReference>
<dbReference type="GO" id="GO:0007601">
    <property type="term" value="P:visual perception"/>
    <property type="evidence" value="ECO:0007669"/>
    <property type="project" value="UniProtKB-KW"/>
</dbReference>
<dbReference type="GO" id="GO:1901827">
    <property type="term" value="P:zeaxanthin biosynthetic process"/>
    <property type="evidence" value="ECO:0000250"/>
    <property type="project" value="UniProtKB"/>
</dbReference>
<dbReference type="InterPro" id="IPR004294">
    <property type="entry name" value="Carotenoid_Oase"/>
</dbReference>
<dbReference type="PANTHER" id="PTHR10543">
    <property type="entry name" value="BETA-CAROTENE DIOXYGENASE"/>
    <property type="match status" value="1"/>
</dbReference>
<dbReference type="PANTHER" id="PTHR10543:SF57">
    <property type="entry name" value="RETINOID ISOMEROHYDROLASE"/>
    <property type="match status" value="1"/>
</dbReference>
<dbReference type="Pfam" id="PF03055">
    <property type="entry name" value="RPE65"/>
    <property type="match status" value="1"/>
</dbReference>
<sequence>MSIQVEHPAGGYKKLFETVEELSSPLTAHVTGRIPLWLTGSLLRCGPGLFEVGSEPFYHLFDGQALLHKFDFKEGHVTYHRRFIRTDAYVRAMTEKRIVITEFGTCAFPDPCKNIFSRFFSYFRGVEVTDNALVNVYPVGEDYYACTETNFITKINPETLETIKQVDLCNYVSVNGATAHPHIENDGTVYNIGNCFGKNFSIAYNIVKIPPLQADKEDPISKSEIVVQFPCSDRFKPSYVHSFGLTPNYIVFVETPVKINLFKFLSSWSLWGANYMDCFESNETMGVWLHIADKKRKKYLNNKYRTSPFNLFHHINTYEDNGFLIVDLCCWKGFEFVYNYLYLANLRENWEEVKKNARKAPQPEVRRYVLPLNIDKADTGKNLITLPNTTATAILCSEETIWLEPEVLFSGPRQAFEFPQINYQKYCGKPYTYAYGLGLNHFVPDRLCKLNVKTKETWVWQEPDSYPSEPIFVSHPDALEEDDGVVLSVVVSPGAGQKPAYLLILNAKDLSEVARAEVEINIPVTFHGLFKKS</sequence>
<name>RPE65_CHLAE</name>
<accession>Q9XT71</accession>
<reference key="1">
    <citation type="journal article" date="1999" name="FEBS Lett.">
        <title>Identification of RPE65 in transformed kidney cells.</title>
        <authorList>
            <person name="Ma J.X."/>
            <person name="Zhang D."/>
            <person name="Laser M."/>
            <person name="Brownlee N.A."/>
            <person name="Re G.G."/>
            <person name="Hazen-Martin D.J."/>
            <person name="Redmond T.M."/>
            <person name="Crouch R.K."/>
        </authorList>
    </citation>
    <scope>NUCLEOTIDE SEQUENCE [MRNA]</scope>
    <source>
        <tissue>Kidney</tissue>
    </source>
</reference>
<proteinExistence type="evidence at transcript level"/>
<keyword id="KW-0007">Acetylation</keyword>
<keyword id="KW-1003">Cell membrane</keyword>
<keyword id="KW-0963">Cytoplasm</keyword>
<keyword id="KW-0256">Endoplasmic reticulum</keyword>
<keyword id="KW-0378">Hydrolase</keyword>
<keyword id="KW-0408">Iron</keyword>
<keyword id="KW-0413">Isomerase</keyword>
<keyword id="KW-0443">Lipid metabolism</keyword>
<keyword id="KW-0449">Lipoprotein</keyword>
<keyword id="KW-0472">Membrane</keyword>
<keyword id="KW-0479">Metal-binding</keyword>
<keyword id="KW-0492">Microsome</keyword>
<keyword id="KW-0564">Palmitate</keyword>
<keyword id="KW-0597">Phosphoprotein</keyword>
<keyword id="KW-0716">Sensory transduction</keyword>
<keyword id="KW-0844">Vision</keyword>
<feature type="initiator methionine" description="Removed" evidence="3">
    <location>
        <position position="1"/>
    </location>
</feature>
<feature type="chain" id="PRO_0000143942" description="Retinoid isomerohydrolase">
    <location>
        <begin position="2"/>
        <end position="533"/>
    </location>
</feature>
<feature type="binding site" evidence="3">
    <location>
        <position position="180"/>
    </location>
    <ligand>
        <name>Fe cation</name>
        <dbReference type="ChEBI" id="CHEBI:24875"/>
        <note>catalytic</note>
    </ligand>
</feature>
<feature type="binding site" evidence="3">
    <location>
        <position position="241"/>
    </location>
    <ligand>
        <name>Fe cation</name>
        <dbReference type="ChEBI" id="CHEBI:24875"/>
        <note>catalytic</note>
    </ligand>
</feature>
<feature type="binding site" evidence="3">
    <location>
        <position position="313"/>
    </location>
    <ligand>
        <name>Fe cation</name>
        <dbReference type="ChEBI" id="CHEBI:24875"/>
        <note>catalytic</note>
    </ligand>
</feature>
<feature type="binding site" evidence="3">
    <location>
        <position position="527"/>
    </location>
    <ligand>
        <name>Fe cation</name>
        <dbReference type="ChEBI" id="CHEBI:24875"/>
        <note>catalytic</note>
    </ligand>
</feature>
<feature type="modified residue" description="N-acetylserine" evidence="3">
    <location>
        <position position="2"/>
    </location>
</feature>
<feature type="modified residue" description="Phosphothreonine" evidence="2">
    <location>
        <position position="101"/>
    </location>
</feature>
<feature type="modified residue" description="Phosphothreonine" evidence="2">
    <location>
        <position position="105"/>
    </location>
</feature>
<feature type="modified residue" description="N6-acetyllysine" evidence="2">
    <location>
        <position position="113"/>
    </location>
</feature>
<feature type="modified residue" description="Phosphoserine" evidence="2">
    <location>
        <position position="117"/>
    </location>
</feature>
<feature type="lipid moiety-binding region" description="S-palmitoyl cysteine; in membrane form" evidence="3">
    <location>
        <position position="112"/>
    </location>
</feature>
<feature type="lipid moiety-binding region" description="S-palmitoyl cysteine; in membrane form" evidence="3">
    <location>
        <position position="231"/>
    </location>
</feature>
<feature type="lipid moiety-binding region" description="S-palmitoyl cysteine; in membrane form" evidence="3">
    <location>
        <position position="329"/>
    </location>
</feature>
<feature type="lipid moiety-binding region" description="S-palmitoyl cysteine; in membrane form" evidence="3">
    <location>
        <position position="330"/>
    </location>
</feature>
<gene>
    <name type="primary">RPE65</name>
</gene>